<comment type="function">
    <text evidence="1">Binds to the 23S rRNA.</text>
</comment>
<comment type="similarity">
    <text evidence="1">Belongs to the bacterial ribosomal protein bL9 family.</text>
</comment>
<reference key="1">
    <citation type="journal article" date="2007" name="Curr. Biol.">
        <title>Reduced genome of the thioautotrophic intracellular symbiont in a deep-sea clam, Calyptogena okutanii.</title>
        <authorList>
            <person name="Kuwahara H."/>
            <person name="Yoshida T."/>
            <person name="Takaki Y."/>
            <person name="Shimamura S."/>
            <person name="Nishi S."/>
            <person name="Harada M."/>
            <person name="Matsuyama K."/>
            <person name="Takishita K."/>
            <person name="Kawato M."/>
            <person name="Uematsu K."/>
            <person name="Fujiwara Y."/>
            <person name="Sato T."/>
            <person name="Kato C."/>
            <person name="Kitagawa M."/>
            <person name="Kato I."/>
            <person name="Maruyama T."/>
        </authorList>
    </citation>
    <scope>NUCLEOTIDE SEQUENCE [LARGE SCALE GENOMIC DNA]</scope>
    <source>
        <strain>HA</strain>
    </source>
</reference>
<evidence type="ECO:0000255" key="1">
    <source>
        <dbReference type="HAMAP-Rule" id="MF_00503"/>
    </source>
</evidence>
<evidence type="ECO:0000305" key="2"/>
<sequence>MQVILLENIQKLGNLGDIINVKAGYTRNFLIPKGKAKLATKTNLVEFELIRAKLQIAEAKTLKNAKAIETKMTNTICIIQANASEEGKLFGSINTTDIQTSLIKSGFKIEKRNIDIPETIRHTGEYKININLHTNITVSVKIVIEALQKV</sequence>
<protein>
    <recommendedName>
        <fullName evidence="1">Large ribosomal subunit protein bL9</fullName>
    </recommendedName>
    <alternativeName>
        <fullName evidence="2">50S ribosomal protein L9</fullName>
    </alternativeName>
</protein>
<keyword id="KW-1185">Reference proteome</keyword>
<keyword id="KW-0687">Ribonucleoprotein</keyword>
<keyword id="KW-0689">Ribosomal protein</keyword>
<keyword id="KW-0694">RNA-binding</keyword>
<keyword id="KW-0699">rRNA-binding</keyword>
<proteinExistence type="inferred from homology"/>
<organism>
    <name type="scientific">Vesicomyosocius okutanii subsp. Calyptogena okutanii (strain HA)</name>
    <dbReference type="NCBI Taxonomy" id="412965"/>
    <lineage>
        <taxon>Bacteria</taxon>
        <taxon>Pseudomonadati</taxon>
        <taxon>Pseudomonadota</taxon>
        <taxon>Gammaproteobacteria</taxon>
        <taxon>Candidatus Pseudothioglobaceae</taxon>
        <taxon>Candidatus Vesicomyosocius</taxon>
    </lineage>
</organism>
<dbReference type="EMBL" id="AP009247">
    <property type="protein sequence ID" value="BAF61724.1"/>
    <property type="molecule type" value="Genomic_DNA"/>
</dbReference>
<dbReference type="RefSeq" id="WP_011929994.1">
    <property type="nucleotide sequence ID" value="NC_009465.1"/>
</dbReference>
<dbReference type="SMR" id="A5CWE1"/>
<dbReference type="STRING" id="412965.COSY_0611"/>
<dbReference type="KEGG" id="vok:COSY_0611"/>
<dbReference type="eggNOG" id="COG0359">
    <property type="taxonomic scope" value="Bacteria"/>
</dbReference>
<dbReference type="HOGENOM" id="CLU_078938_4_1_6"/>
<dbReference type="OrthoDB" id="9788336at2"/>
<dbReference type="Proteomes" id="UP000000247">
    <property type="component" value="Chromosome"/>
</dbReference>
<dbReference type="GO" id="GO:1990904">
    <property type="term" value="C:ribonucleoprotein complex"/>
    <property type="evidence" value="ECO:0007669"/>
    <property type="project" value="UniProtKB-KW"/>
</dbReference>
<dbReference type="GO" id="GO:0005840">
    <property type="term" value="C:ribosome"/>
    <property type="evidence" value="ECO:0007669"/>
    <property type="project" value="UniProtKB-KW"/>
</dbReference>
<dbReference type="GO" id="GO:0019843">
    <property type="term" value="F:rRNA binding"/>
    <property type="evidence" value="ECO:0007669"/>
    <property type="project" value="UniProtKB-UniRule"/>
</dbReference>
<dbReference type="GO" id="GO:0003735">
    <property type="term" value="F:structural constituent of ribosome"/>
    <property type="evidence" value="ECO:0007669"/>
    <property type="project" value="InterPro"/>
</dbReference>
<dbReference type="GO" id="GO:0006412">
    <property type="term" value="P:translation"/>
    <property type="evidence" value="ECO:0007669"/>
    <property type="project" value="UniProtKB-UniRule"/>
</dbReference>
<dbReference type="Gene3D" id="3.10.430.100">
    <property type="entry name" value="Ribosomal protein L9, C-terminal domain"/>
    <property type="match status" value="1"/>
</dbReference>
<dbReference type="Gene3D" id="3.40.5.10">
    <property type="entry name" value="Ribosomal protein L9, N-terminal domain"/>
    <property type="match status" value="1"/>
</dbReference>
<dbReference type="HAMAP" id="MF_00503">
    <property type="entry name" value="Ribosomal_bL9"/>
    <property type="match status" value="1"/>
</dbReference>
<dbReference type="InterPro" id="IPR000244">
    <property type="entry name" value="Ribosomal_bL9"/>
</dbReference>
<dbReference type="InterPro" id="IPR009027">
    <property type="entry name" value="Ribosomal_bL9/RNase_H1_N"/>
</dbReference>
<dbReference type="InterPro" id="IPR020594">
    <property type="entry name" value="Ribosomal_bL9_bac/chp"/>
</dbReference>
<dbReference type="InterPro" id="IPR020069">
    <property type="entry name" value="Ribosomal_bL9_C"/>
</dbReference>
<dbReference type="InterPro" id="IPR036791">
    <property type="entry name" value="Ribosomal_bL9_C_sf"/>
</dbReference>
<dbReference type="InterPro" id="IPR020070">
    <property type="entry name" value="Ribosomal_bL9_N"/>
</dbReference>
<dbReference type="InterPro" id="IPR036935">
    <property type="entry name" value="Ribosomal_bL9_N_sf"/>
</dbReference>
<dbReference type="NCBIfam" id="TIGR00158">
    <property type="entry name" value="L9"/>
    <property type="match status" value="1"/>
</dbReference>
<dbReference type="PANTHER" id="PTHR21368">
    <property type="entry name" value="50S RIBOSOMAL PROTEIN L9"/>
    <property type="match status" value="1"/>
</dbReference>
<dbReference type="Pfam" id="PF03948">
    <property type="entry name" value="Ribosomal_L9_C"/>
    <property type="match status" value="1"/>
</dbReference>
<dbReference type="Pfam" id="PF01281">
    <property type="entry name" value="Ribosomal_L9_N"/>
    <property type="match status" value="1"/>
</dbReference>
<dbReference type="SUPFAM" id="SSF55658">
    <property type="entry name" value="L9 N-domain-like"/>
    <property type="match status" value="1"/>
</dbReference>
<dbReference type="SUPFAM" id="SSF55653">
    <property type="entry name" value="Ribosomal protein L9 C-domain"/>
    <property type="match status" value="1"/>
</dbReference>
<dbReference type="PROSITE" id="PS00651">
    <property type="entry name" value="RIBOSOMAL_L9"/>
    <property type="match status" value="1"/>
</dbReference>
<accession>A5CWE1</accession>
<feature type="chain" id="PRO_1000014883" description="Large ribosomal subunit protein bL9">
    <location>
        <begin position="1"/>
        <end position="150"/>
    </location>
</feature>
<name>RL9_VESOH</name>
<gene>
    <name evidence="1" type="primary">rplI</name>
    <name type="ordered locus">COSY_0611</name>
</gene>